<keyword id="KW-0150">Chloroplast</keyword>
<keyword id="KW-0240">DNA-directed RNA polymerase</keyword>
<keyword id="KW-0460">Magnesium</keyword>
<keyword id="KW-0479">Metal-binding</keyword>
<keyword id="KW-0548">Nucleotidyltransferase</keyword>
<keyword id="KW-0934">Plastid</keyword>
<keyword id="KW-1185">Reference proteome</keyword>
<keyword id="KW-0804">Transcription</keyword>
<keyword id="KW-0808">Transferase</keyword>
<keyword id="KW-0862">Zinc</keyword>
<dbReference type="EC" id="2.7.7.6" evidence="1"/>
<dbReference type="EMBL" id="AJ506156">
    <property type="protein sequence ID" value="CAD45098.1"/>
    <property type="molecule type" value="Genomic_DNA"/>
</dbReference>
<dbReference type="RefSeq" id="NP_904090.1">
    <property type="nucleotide sequence ID" value="NC_005086.1"/>
</dbReference>
<dbReference type="SMR" id="P60287"/>
<dbReference type="STRING" id="13333.P60287"/>
<dbReference type="GeneID" id="2546589"/>
<dbReference type="KEGG" id="atr:2546589"/>
<dbReference type="OrthoDB" id="1862828at2759"/>
<dbReference type="Proteomes" id="UP000017836">
    <property type="component" value="Chloroplast"/>
</dbReference>
<dbReference type="GO" id="GO:0009507">
    <property type="term" value="C:chloroplast"/>
    <property type="evidence" value="ECO:0007669"/>
    <property type="project" value="UniProtKB-SubCell"/>
</dbReference>
<dbReference type="GO" id="GO:0000428">
    <property type="term" value="C:DNA-directed RNA polymerase complex"/>
    <property type="evidence" value="ECO:0007669"/>
    <property type="project" value="UniProtKB-KW"/>
</dbReference>
<dbReference type="GO" id="GO:0005739">
    <property type="term" value="C:mitochondrion"/>
    <property type="evidence" value="ECO:0007669"/>
    <property type="project" value="GOC"/>
</dbReference>
<dbReference type="GO" id="GO:0003677">
    <property type="term" value="F:DNA binding"/>
    <property type="evidence" value="ECO:0007669"/>
    <property type="project" value="UniProtKB-UniRule"/>
</dbReference>
<dbReference type="GO" id="GO:0003899">
    <property type="term" value="F:DNA-directed RNA polymerase activity"/>
    <property type="evidence" value="ECO:0007669"/>
    <property type="project" value="UniProtKB-UniRule"/>
</dbReference>
<dbReference type="GO" id="GO:0000287">
    <property type="term" value="F:magnesium ion binding"/>
    <property type="evidence" value="ECO:0007669"/>
    <property type="project" value="UniProtKB-UniRule"/>
</dbReference>
<dbReference type="GO" id="GO:0008270">
    <property type="term" value="F:zinc ion binding"/>
    <property type="evidence" value="ECO:0007669"/>
    <property type="project" value="UniProtKB-UniRule"/>
</dbReference>
<dbReference type="GO" id="GO:0006351">
    <property type="term" value="P:DNA-templated transcription"/>
    <property type="evidence" value="ECO:0007669"/>
    <property type="project" value="UniProtKB-UniRule"/>
</dbReference>
<dbReference type="FunFam" id="4.10.860.120:FF:000007">
    <property type="entry name" value="DNA-directed RNA polymerase subunit gamma"/>
    <property type="match status" value="1"/>
</dbReference>
<dbReference type="Gene3D" id="1.10.40.90">
    <property type="match status" value="1"/>
</dbReference>
<dbReference type="Gene3D" id="2.40.40.20">
    <property type="match status" value="1"/>
</dbReference>
<dbReference type="Gene3D" id="4.10.860.120">
    <property type="entry name" value="RNA polymerase II, clamp domain"/>
    <property type="match status" value="1"/>
</dbReference>
<dbReference type="Gene3D" id="1.10.274.100">
    <property type="entry name" value="RNA polymerase Rpb1, domain 3"/>
    <property type="match status" value="1"/>
</dbReference>
<dbReference type="HAMAP" id="MF_01323">
    <property type="entry name" value="RNApol_bact_RpoC1"/>
    <property type="match status" value="1"/>
</dbReference>
<dbReference type="InterPro" id="IPR045867">
    <property type="entry name" value="DNA-dir_RpoC_beta_prime"/>
</dbReference>
<dbReference type="InterPro" id="IPR000722">
    <property type="entry name" value="RNA_pol_asu"/>
</dbReference>
<dbReference type="InterPro" id="IPR006592">
    <property type="entry name" value="RNA_pol_N"/>
</dbReference>
<dbReference type="InterPro" id="IPR007080">
    <property type="entry name" value="RNA_pol_Rpb1_1"/>
</dbReference>
<dbReference type="InterPro" id="IPR042102">
    <property type="entry name" value="RNA_pol_Rpb1_3_sf"/>
</dbReference>
<dbReference type="InterPro" id="IPR044893">
    <property type="entry name" value="RNA_pol_Rpb1_clamp_domain"/>
</dbReference>
<dbReference type="InterPro" id="IPR034678">
    <property type="entry name" value="RNApol_RpoC1"/>
</dbReference>
<dbReference type="PANTHER" id="PTHR19376">
    <property type="entry name" value="DNA-DIRECTED RNA POLYMERASE"/>
    <property type="match status" value="1"/>
</dbReference>
<dbReference type="PANTHER" id="PTHR19376:SF54">
    <property type="entry name" value="DNA-DIRECTED RNA POLYMERASE SUBUNIT BETA"/>
    <property type="match status" value="1"/>
</dbReference>
<dbReference type="Pfam" id="PF04997">
    <property type="entry name" value="RNA_pol_Rpb1_1"/>
    <property type="match status" value="1"/>
</dbReference>
<dbReference type="Pfam" id="PF00623">
    <property type="entry name" value="RNA_pol_Rpb1_2"/>
    <property type="match status" value="2"/>
</dbReference>
<dbReference type="SMART" id="SM00663">
    <property type="entry name" value="RPOLA_N"/>
    <property type="match status" value="1"/>
</dbReference>
<dbReference type="SUPFAM" id="SSF64484">
    <property type="entry name" value="beta and beta-prime subunits of DNA dependent RNA-polymerase"/>
    <property type="match status" value="1"/>
</dbReference>
<accession>P60287</accession>
<gene>
    <name evidence="1" type="primary">rpoC1</name>
</gene>
<comment type="function">
    <text evidence="1">DNA-dependent RNA polymerase catalyzes the transcription of DNA into RNA using the four ribonucleoside triphosphates as substrates.</text>
</comment>
<comment type="catalytic activity">
    <reaction evidence="1">
        <text>RNA(n) + a ribonucleoside 5'-triphosphate = RNA(n+1) + diphosphate</text>
        <dbReference type="Rhea" id="RHEA:21248"/>
        <dbReference type="Rhea" id="RHEA-COMP:14527"/>
        <dbReference type="Rhea" id="RHEA-COMP:17342"/>
        <dbReference type="ChEBI" id="CHEBI:33019"/>
        <dbReference type="ChEBI" id="CHEBI:61557"/>
        <dbReference type="ChEBI" id="CHEBI:140395"/>
        <dbReference type="EC" id="2.7.7.6"/>
    </reaction>
</comment>
<comment type="cofactor">
    <cofactor evidence="1">
        <name>Mg(2+)</name>
        <dbReference type="ChEBI" id="CHEBI:18420"/>
    </cofactor>
    <text evidence="1">Binds 1 Mg(2+) ion per subunit.</text>
</comment>
<comment type="cofactor">
    <cofactor evidence="1">
        <name>Zn(2+)</name>
        <dbReference type="ChEBI" id="CHEBI:29105"/>
    </cofactor>
    <text evidence="1">Binds 1 Zn(2+) ion per subunit.</text>
</comment>
<comment type="subunit">
    <text evidence="1">In plastids the minimal PEP RNA polymerase catalytic core is composed of four subunits: alpha, beta, beta', and beta''. When a (nuclear-encoded) sigma factor is associated with the core the holoenzyme is formed, which can initiate transcription.</text>
</comment>
<comment type="subcellular location">
    <subcellularLocation>
        <location evidence="1">Plastid</location>
        <location evidence="1">Chloroplast</location>
    </subcellularLocation>
</comment>
<comment type="similarity">
    <text evidence="1">Belongs to the RNA polymerase beta' chain family. RpoC1 subfamily.</text>
</comment>
<protein>
    <recommendedName>
        <fullName evidence="1">DNA-directed RNA polymerase subunit beta'</fullName>
        <ecNumber evidence="1">2.7.7.6</ecNumber>
    </recommendedName>
    <alternativeName>
        <fullName evidence="1">PEP</fullName>
    </alternativeName>
    <alternativeName>
        <fullName evidence="1">Plastid-encoded RNA polymerase subunit beta'</fullName>
        <shortName evidence="1">RNA polymerase subunit beta'</shortName>
    </alternativeName>
</protein>
<evidence type="ECO:0000255" key="1">
    <source>
        <dbReference type="HAMAP-Rule" id="MF_01323"/>
    </source>
</evidence>
<feature type="chain" id="PRO_0000067859" description="DNA-directed RNA polymerase subunit beta'">
    <location>
        <begin position="1"/>
        <end position="680"/>
    </location>
</feature>
<feature type="binding site" evidence="1">
    <location>
        <position position="69"/>
    </location>
    <ligand>
        <name>Zn(2+)</name>
        <dbReference type="ChEBI" id="CHEBI:29105"/>
    </ligand>
</feature>
<feature type="binding site" evidence="1">
    <location>
        <position position="71"/>
    </location>
    <ligand>
        <name>Zn(2+)</name>
        <dbReference type="ChEBI" id="CHEBI:29105"/>
    </ligand>
</feature>
<feature type="binding site" evidence="1">
    <location>
        <position position="87"/>
    </location>
    <ligand>
        <name>Zn(2+)</name>
        <dbReference type="ChEBI" id="CHEBI:29105"/>
    </ligand>
</feature>
<feature type="binding site" evidence="1">
    <location>
        <position position="90"/>
    </location>
    <ligand>
        <name>Zn(2+)</name>
        <dbReference type="ChEBI" id="CHEBI:29105"/>
    </ligand>
</feature>
<feature type="binding site" evidence="1">
    <location>
        <position position="489"/>
    </location>
    <ligand>
        <name>Mg(2+)</name>
        <dbReference type="ChEBI" id="CHEBI:18420"/>
    </ligand>
</feature>
<feature type="binding site" evidence="1">
    <location>
        <position position="491"/>
    </location>
    <ligand>
        <name>Mg(2+)</name>
        <dbReference type="ChEBI" id="CHEBI:18420"/>
    </ligand>
</feature>
<feature type="binding site" evidence="1">
    <location>
        <position position="493"/>
    </location>
    <ligand>
        <name>Mg(2+)</name>
        <dbReference type="ChEBI" id="CHEBI:18420"/>
    </ligand>
</feature>
<reference key="1">
    <citation type="journal article" date="2003" name="Mol. Biol. Evol.">
        <title>Analysis of the Amborella trichopoda chloroplast genome sequence suggests that Amborella is not a basal angiosperm.</title>
        <authorList>
            <person name="Goremykin V.V."/>
            <person name="Hirsch-Ernst K.I."/>
            <person name="Wolfl S."/>
            <person name="Hellwig F.H."/>
        </authorList>
    </citation>
    <scope>NUCLEOTIDE SEQUENCE [LARGE SCALE GENOMIC DNA]</scope>
</reference>
<name>RPOC1_AMBTC</name>
<organism>
    <name type="scientific">Amborella trichopoda</name>
    <dbReference type="NCBI Taxonomy" id="13333"/>
    <lineage>
        <taxon>Eukaryota</taxon>
        <taxon>Viridiplantae</taxon>
        <taxon>Streptophyta</taxon>
        <taxon>Embryophyta</taxon>
        <taxon>Tracheophyta</taxon>
        <taxon>Spermatophyta</taxon>
        <taxon>Magnoliopsida</taxon>
        <taxon>Amborellales</taxon>
        <taxon>Amborellaceae</taxon>
        <taxon>Amborella</taxon>
    </lineage>
</organism>
<sequence>MIDRYKHQQLRIGLVSPQQITAWANKILPNGEMVGEVTKPYTFHYKSNKPEKDGLFCERIFGPIKSGICACGNYRVIGDEKEDPKFCEQCGVESVDSRIRRYQMGYIKLACPVTHVWYLKRLPSYIANLSDRPLKELEGLVYCDFSFARPIAKKPTFLRLRGSFEYEIQSRKYSIPLFFTTQCFNLFRNREISTGAGAIREQLADPDLRIITDRSLVEWKELGEERSAENEWEDKKIVRRKDFLVRRMELAKHLLRTNVEPERMVLCLLPVLPPELRPIIQIDGGKPMSSDINELYRRVIYRNNTLIDPLTTSRSTPGESVMCQEKLVQEAVDTLLDNGIRGQPMRDGHNKVYKSFSDVIEGKEGRFRETLLGKRVDYSGRSVIVVGPSLSLHRCGLPREIAIELFQTFVIRGLIRQHVASNIGIAKSKIREKEPIVWEILQKVMEGHPVLLNRAPTLHRLGIQAFQPILVEGRAICLHPLVRKGFNADFDGDQMAVHVPLSLEAQAEARLLMFSHMNLLSPAIGDPISVPTQDMLIGLYVLTIGNRRGICTNRYNPCNYRNYQNEIVDDNNYKYTKEKEPYFCSSYDALGAYRQKRIDLYSPLWLRWRLDQCVIASINREVPIEVQYESLGIYHEIHEHYRIVKSVKKEIVCIYIRTTVGHISFYREIEEAIQGFCRTY</sequence>
<proteinExistence type="inferred from homology"/>
<geneLocation type="chloroplast"/>